<name>CBIT_METM5</name>
<protein>
    <recommendedName>
        <fullName evidence="1">Probable cobalt-precorrin-6B C(15)-methyltransferase (decarboxylating)</fullName>
        <ecNumber evidence="1">2.1.1.196</ecNumber>
    </recommendedName>
</protein>
<dbReference type="EC" id="2.1.1.196" evidence="1"/>
<dbReference type="EMBL" id="CP000609">
    <property type="protein sequence ID" value="ABO34685.1"/>
    <property type="molecule type" value="Genomic_DNA"/>
</dbReference>
<dbReference type="RefSeq" id="WP_011868140.1">
    <property type="nucleotide sequence ID" value="NC_009135.1"/>
</dbReference>
<dbReference type="SMR" id="A4FWV6"/>
<dbReference type="STRING" id="402880.MmarC5_0369"/>
<dbReference type="GeneID" id="4928375"/>
<dbReference type="KEGG" id="mmq:MmarC5_0369"/>
<dbReference type="eggNOG" id="arCOG00977">
    <property type="taxonomic scope" value="Archaea"/>
</dbReference>
<dbReference type="HOGENOM" id="CLU_094143_0_0_2"/>
<dbReference type="OrthoDB" id="6027at2157"/>
<dbReference type="UniPathway" id="UPA00148">
    <property type="reaction ID" value="UER00229"/>
</dbReference>
<dbReference type="Proteomes" id="UP000000253">
    <property type="component" value="Chromosome"/>
</dbReference>
<dbReference type="GO" id="GO:0043776">
    <property type="term" value="F:cobalt-precorrin-6B C5-methyltransferase activity"/>
    <property type="evidence" value="ECO:0007669"/>
    <property type="project" value="RHEA"/>
</dbReference>
<dbReference type="GO" id="GO:0008276">
    <property type="term" value="F:protein methyltransferase activity"/>
    <property type="evidence" value="ECO:0007669"/>
    <property type="project" value="InterPro"/>
</dbReference>
<dbReference type="GO" id="GO:0019251">
    <property type="term" value="P:anaerobic cobalamin biosynthetic process"/>
    <property type="evidence" value="ECO:0007669"/>
    <property type="project" value="UniProtKB-UniRule"/>
</dbReference>
<dbReference type="GO" id="GO:0032259">
    <property type="term" value="P:methylation"/>
    <property type="evidence" value="ECO:0007669"/>
    <property type="project" value="UniProtKB-KW"/>
</dbReference>
<dbReference type="CDD" id="cd02440">
    <property type="entry name" value="AdoMet_MTases"/>
    <property type="match status" value="1"/>
</dbReference>
<dbReference type="Gene3D" id="3.40.50.150">
    <property type="entry name" value="Vaccinia Virus protein VP39"/>
    <property type="match status" value="1"/>
</dbReference>
<dbReference type="HAMAP" id="MF_00786">
    <property type="entry name" value="CbiT"/>
    <property type="match status" value="1"/>
</dbReference>
<dbReference type="InterPro" id="IPR023475">
    <property type="entry name" value="CbiT"/>
</dbReference>
<dbReference type="InterPro" id="IPR014008">
    <property type="entry name" value="Cbl_synth_MTase_CbiT"/>
</dbReference>
<dbReference type="InterPro" id="IPR050714">
    <property type="entry name" value="Cobalamin_biosynth_MTase"/>
</dbReference>
<dbReference type="InterPro" id="IPR025714">
    <property type="entry name" value="Methyltranfer_dom"/>
</dbReference>
<dbReference type="InterPro" id="IPR029063">
    <property type="entry name" value="SAM-dependent_MTases_sf"/>
</dbReference>
<dbReference type="NCBIfam" id="TIGR02469">
    <property type="entry name" value="CbiT"/>
    <property type="match status" value="1"/>
</dbReference>
<dbReference type="PANTHER" id="PTHR43182">
    <property type="entry name" value="COBALT-PRECORRIN-6B C(15)-METHYLTRANSFERASE (DECARBOXYLATING)"/>
    <property type="match status" value="1"/>
</dbReference>
<dbReference type="PANTHER" id="PTHR43182:SF1">
    <property type="entry name" value="COBALT-PRECORRIN-7 C(5)-METHYLTRANSFERASE"/>
    <property type="match status" value="1"/>
</dbReference>
<dbReference type="Pfam" id="PF13847">
    <property type="entry name" value="Methyltransf_31"/>
    <property type="match status" value="1"/>
</dbReference>
<dbReference type="SUPFAM" id="SSF53335">
    <property type="entry name" value="S-adenosyl-L-methionine-dependent methyltransferases"/>
    <property type="match status" value="1"/>
</dbReference>
<organism>
    <name type="scientific">Methanococcus maripaludis (strain C5 / ATCC BAA-1333)</name>
    <dbReference type="NCBI Taxonomy" id="402880"/>
    <lineage>
        <taxon>Archaea</taxon>
        <taxon>Methanobacteriati</taxon>
        <taxon>Methanobacteriota</taxon>
        <taxon>Methanomada group</taxon>
        <taxon>Methanococci</taxon>
        <taxon>Methanococcales</taxon>
        <taxon>Methanococcaceae</taxon>
        <taxon>Methanococcus</taxon>
    </lineage>
</organism>
<accession>A4FWV6</accession>
<keyword id="KW-0169">Cobalamin biosynthesis</keyword>
<keyword id="KW-0489">Methyltransferase</keyword>
<keyword id="KW-0949">S-adenosyl-L-methionine</keyword>
<keyword id="KW-0808">Transferase</keyword>
<proteinExistence type="inferred from homology"/>
<sequence>MIQDSEFFRMEGVPITKEEIRAVSIGKLNLDPEDIVLDIGCGSGGMSVEIAKRSKFVYSIDNSEDAKNTTSINLKKFKIENCEVFHGDAKDLISKFDFNKVFIGGTQNIEQTLEILKEKKIEKVVANTIVLENSVKIITKFEELGYNVDFVNLSVSYGKKISSGHIMLSKNPITIITATLK</sequence>
<gene>
    <name evidence="1" type="primary">cbiT</name>
    <name type="ordered locus">MmarC5_0369</name>
</gene>
<feature type="chain" id="PRO_1000046842" description="Probable cobalt-precorrin-6B C(15)-methyltransferase (decarboxylating)">
    <location>
        <begin position="1"/>
        <end position="181"/>
    </location>
</feature>
<feature type="binding site" evidence="1">
    <location>
        <position position="16"/>
    </location>
    <ligand>
        <name>S-adenosyl-L-methionine</name>
        <dbReference type="ChEBI" id="CHEBI:59789"/>
    </ligand>
</feature>
<feature type="binding site" evidence="1">
    <location>
        <begin position="40"/>
        <end position="44"/>
    </location>
    <ligand>
        <name>S-adenosyl-L-methionine</name>
        <dbReference type="ChEBI" id="CHEBI:59789"/>
    </ligand>
</feature>
<feature type="binding site" evidence="1">
    <location>
        <position position="61"/>
    </location>
    <ligand>
        <name>S-adenosyl-L-methionine</name>
        <dbReference type="ChEBI" id="CHEBI:59789"/>
    </ligand>
</feature>
<feature type="binding site" evidence="1">
    <location>
        <position position="89"/>
    </location>
    <ligand>
        <name>S-adenosyl-L-methionine</name>
        <dbReference type="ChEBI" id="CHEBI:59789"/>
    </ligand>
</feature>
<evidence type="ECO:0000255" key="1">
    <source>
        <dbReference type="HAMAP-Rule" id="MF_00786"/>
    </source>
</evidence>
<reference key="1">
    <citation type="submission" date="2007-03" db="EMBL/GenBank/DDBJ databases">
        <title>Complete sequence of chromosome of Methanococcus maripaludis C5.</title>
        <authorList>
            <consortium name="US DOE Joint Genome Institute"/>
            <person name="Copeland A."/>
            <person name="Lucas S."/>
            <person name="Lapidus A."/>
            <person name="Barry K."/>
            <person name="Glavina del Rio T."/>
            <person name="Dalin E."/>
            <person name="Tice H."/>
            <person name="Pitluck S."/>
            <person name="Chertkov O."/>
            <person name="Brettin T."/>
            <person name="Bruce D."/>
            <person name="Han C."/>
            <person name="Detter J.C."/>
            <person name="Schmutz J."/>
            <person name="Larimer F."/>
            <person name="Land M."/>
            <person name="Hauser L."/>
            <person name="Kyrpides N."/>
            <person name="Mikhailova N."/>
            <person name="Sieprawska-Lupa M."/>
            <person name="Whitman W.B."/>
            <person name="Richardson P."/>
        </authorList>
    </citation>
    <scope>NUCLEOTIDE SEQUENCE [LARGE SCALE GENOMIC DNA]</scope>
    <source>
        <strain>C5 / ATCC BAA-1333</strain>
    </source>
</reference>
<comment type="function">
    <text evidence="1">Catalyzes the methylation of C-15 in cobalt-precorrin-6B followed by the decarboxylation of C-12 to form cobalt-precorrin-7.</text>
</comment>
<comment type="catalytic activity">
    <reaction evidence="1">
        <text>Co-precorrin-6B + S-adenosyl-L-methionine = Co-precorrin-7 + S-adenosyl-L-homocysteine + CO2</text>
        <dbReference type="Rhea" id="RHEA:36067"/>
        <dbReference type="ChEBI" id="CHEBI:16526"/>
        <dbReference type="ChEBI" id="CHEBI:57856"/>
        <dbReference type="ChEBI" id="CHEBI:59789"/>
        <dbReference type="ChEBI" id="CHEBI:70791"/>
        <dbReference type="ChEBI" id="CHEBI:72780"/>
        <dbReference type="EC" id="2.1.1.196"/>
    </reaction>
</comment>
<comment type="pathway">
    <text evidence="1">Cofactor biosynthesis; adenosylcobalamin biosynthesis; cob(II)yrinate a,c-diamide from sirohydrochlorin (anaerobic route): step 8/10.</text>
</comment>
<comment type="similarity">
    <text evidence="1">Belongs to the methyltransferase superfamily. Archaeal-type CbiT family.</text>
</comment>